<evidence type="ECO:0000250" key="1">
    <source>
        <dbReference type="UniProtKB" id="Q53TN4"/>
    </source>
</evidence>
<evidence type="ECO:0000250" key="2">
    <source>
        <dbReference type="UniProtKB" id="Q8K385"/>
    </source>
</evidence>
<evidence type="ECO:0000255" key="3"/>
<evidence type="ECO:0000255" key="4">
    <source>
        <dbReference type="PROSITE-ProRule" id="PRU00242"/>
    </source>
</evidence>
<evidence type="ECO:0000255" key="5">
    <source>
        <dbReference type="PROSITE-ProRule" id="PRU00246"/>
    </source>
</evidence>
<evidence type="ECO:0000255" key="6">
    <source>
        <dbReference type="PROSITE-ProRule" id="PRU00363"/>
    </source>
</evidence>
<evidence type="ECO:0000305" key="7"/>
<accession>Q6INU7</accession>
<keyword id="KW-0249">Electron transport</keyword>
<keyword id="KW-0325">Glycoprotein</keyword>
<keyword id="KW-0408">Iron</keyword>
<keyword id="KW-0472">Membrane</keyword>
<keyword id="KW-0479">Metal-binding</keyword>
<keyword id="KW-0560">Oxidoreductase</keyword>
<keyword id="KW-1185">Reference proteome</keyword>
<keyword id="KW-0812">Transmembrane</keyword>
<keyword id="KW-1133">Transmembrane helix</keyword>
<keyword id="KW-0813">Transport</keyword>
<reference key="1">
    <citation type="submission" date="2004-06" db="EMBL/GenBank/DDBJ databases">
        <authorList>
            <consortium name="NIH - Xenopus Gene Collection (XGC) project"/>
        </authorList>
    </citation>
    <scope>NUCLEOTIDE SEQUENCE [LARGE SCALE MRNA]</scope>
    <source>
        <tissue>Ovary</tissue>
    </source>
</reference>
<protein>
    <recommendedName>
        <fullName>Putative ferric-chelate reductase 1</fullName>
        <ecNumber>1.-.-.-</ecNumber>
    </recommendedName>
</protein>
<comment type="function">
    <text evidence="2">Putative ferric-chelate reductases reduce Fe(3+) to Fe(2+) before its transport from the endosome to the cytoplasm.</text>
</comment>
<comment type="cofactor">
    <cofactor evidence="1">
        <name>heme b</name>
        <dbReference type="ChEBI" id="CHEBI:60344"/>
    </cofactor>
    <text evidence="1">Binds 2 heme b groups non-covalently.</text>
</comment>
<comment type="subcellular location">
    <subcellularLocation>
        <location evidence="7">Membrane</location>
        <topology evidence="7">Multi-pass membrane protein</topology>
    </subcellularLocation>
</comment>
<comment type="similarity">
    <text evidence="7">Belongs to the FRRS1 family.</text>
</comment>
<comment type="caution">
    <text evidence="7">The cytochrome b561 domain lacks the conserved His residue that binds iron in the heme. The reductase activity is therefore unsure in vivo.</text>
</comment>
<sequence>MNPLGLFLIYLYTCALTPVSGYPNGKVTSACRSMRPDHGHAPQSEPIHSINVEKTIFKPGDRIKVTLSGSRFDGFLVQARDAENLEGSAVGSFSLTDERISQLLTCDGIQNSAVSHTSKERKLQVELFWIAPANSPKHIQFLATVVEKYKIYWVKIPGPIISQPKAPSIAPKIPSSTIPVVPPPSLSLHKRFNSAGCGSSKFCIRNPVSCDPEHNPECFFLSFRKDGQSVLVEMSGPGQGYISFALSHDQWMGDDDAYLCVKEDDGVQINPAYIRGRSHPEVSSMDVLRDVAWRLEDGVIQCSFRRNIQIPIPKERFDLGRSYFIFLADGDAKDGLLYRHHRQPLMTNRKYCITDFPEDVGGSRSPLIIKLHGAMMFIAWMTTVSIGVIIARFFKPVWPTSSLFGEKIWFQIHRCLMITTVFLTVVAFVLPFIYRGYFSKRAGYHPHLGVTVMILTVLQPVLAVFRPPPQTHRRGIFNWTHWATGTAARIIAVAAMFLGMDLQALDLPDPWDTYTMIGFVLWHVFVDLLLEAHGFCLLKKAKTMEEDQIGILNSSPDEAEGHTFKKIVMTVYICGNLAFLITFLAAINQL</sequence>
<feature type="chain" id="PRO_0000314846" description="Putative ferric-chelate reductase 1">
    <location>
        <begin position="1"/>
        <end position="590"/>
    </location>
</feature>
<feature type="transmembrane region" description="Helical; Name=1" evidence="3">
    <location>
        <begin position="2"/>
        <end position="22"/>
    </location>
</feature>
<feature type="transmembrane region" description="Helical; Name=2" evidence="3">
    <location>
        <begin position="371"/>
        <end position="391"/>
    </location>
</feature>
<feature type="transmembrane region" description="Helical; Name=3" evidence="3">
    <location>
        <begin position="416"/>
        <end position="436"/>
    </location>
</feature>
<feature type="transmembrane region" description="Helical; Name=4" evidence="3">
    <location>
        <begin position="445"/>
        <end position="465"/>
    </location>
</feature>
<feature type="transmembrane region" description="Helical; Name=5" evidence="3">
    <location>
        <begin position="482"/>
        <end position="502"/>
    </location>
</feature>
<feature type="transmembrane region" description="Helical; Name=6" evidence="3">
    <location>
        <begin position="517"/>
        <end position="537"/>
    </location>
</feature>
<feature type="transmembrane region" description="Helical; Name=7" evidence="3">
    <location>
        <begin position="567"/>
        <end position="587"/>
    </location>
</feature>
<feature type="domain" description="Reelin" evidence="6">
    <location>
        <begin position="12"/>
        <end position="179"/>
    </location>
</feature>
<feature type="domain" description="DOMON" evidence="5">
    <location>
        <begin position="217"/>
        <end position="330"/>
    </location>
</feature>
<feature type="domain" description="Cytochrome b561" evidence="4">
    <location>
        <begin position="334"/>
        <end position="533"/>
    </location>
</feature>
<feature type="binding site" description="axial binding residue" evidence="1">
    <location>
        <position position="372"/>
    </location>
    <ligand>
        <name>heme b</name>
        <dbReference type="ChEBI" id="CHEBI:60344"/>
        <label>1</label>
    </ligand>
    <ligandPart>
        <name>Fe</name>
        <dbReference type="ChEBI" id="CHEBI:18248"/>
    </ligandPart>
</feature>
<feature type="binding site" description="axial binding residue" evidence="1">
    <location>
        <position position="413"/>
    </location>
    <ligand>
        <name>heme b</name>
        <dbReference type="ChEBI" id="CHEBI:60344"/>
        <label>2</label>
    </ligand>
    <ligandPart>
        <name>Fe</name>
        <dbReference type="ChEBI" id="CHEBI:18248"/>
    </ligandPart>
</feature>
<feature type="binding site" description="axial binding residue" evidence="1">
    <location>
        <position position="445"/>
    </location>
    <ligand>
        <name>heme b</name>
        <dbReference type="ChEBI" id="CHEBI:60344"/>
        <label>1</label>
    </ligand>
    <ligandPart>
        <name>Fe</name>
        <dbReference type="ChEBI" id="CHEBI:18248"/>
    </ligandPart>
</feature>
<feature type="binding site" description="axial binding residue" evidence="1">
    <location>
        <position position="481"/>
    </location>
    <ligand>
        <name>heme b</name>
        <dbReference type="ChEBI" id="CHEBI:60344"/>
        <label>2</label>
    </ligand>
    <ligandPart>
        <name>Fe</name>
        <dbReference type="ChEBI" id="CHEBI:18248"/>
    </ligandPart>
</feature>
<feature type="glycosylation site" description="N-linked (GlcNAc...) asparagine" evidence="3">
    <location>
        <position position="478"/>
    </location>
</feature>
<organism>
    <name type="scientific">Xenopus laevis</name>
    <name type="common">African clawed frog</name>
    <dbReference type="NCBI Taxonomy" id="8355"/>
    <lineage>
        <taxon>Eukaryota</taxon>
        <taxon>Metazoa</taxon>
        <taxon>Chordata</taxon>
        <taxon>Craniata</taxon>
        <taxon>Vertebrata</taxon>
        <taxon>Euteleostomi</taxon>
        <taxon>Amphibia</taxon>
        <taxon>Batrachia</taxon>
        <taxon>Anura</taxon>
        <taxon>Pipoidea</taxon>
        <taxon>Pipidae</taxon>
        <taxon>Xenopodinae</taxon>
        <taxon>Xenopus</taxon>
        <taxon>Xenopus</taxon>
    </lineage>
</organism>
<proteinExistence type="evidence at transcript level"/>
<name>FRRS1_XENLA</name>
<dbReference type="EC" id="1.-.-.-"/>
<dbReference type="EMBL" id="BC072175">
    <property type="protein sequence ID" value="AAH72175.1"/>
    <property type="molecule type" value="mRNA"/>
</dbReference>
<dbReference type="RefSeq" id="NP_001085128.1">
    <property type="nucleotide sequence ID" value="NM_001091659.1"/>
</dbReference>
<dbReference type="SMR" id="Q6INU7"/>
<dbReference type="GlyCosmos" id="Q6INU7">
    <property type="glycosylation" value="1 site, No reported glycans"/>
</dbReference>
<dbReference type="DNASU" id="432203"/>
<dbReference type="GeneID" id="432203"/>
<dbReference type="KEGG" id="xla:432203"/>
<dbReference type="AGR" id="Xenbase:XB-GENE-989223"/>
<dbReference type="CTD" id="432203"/>
<dbReference type="Xenbase" id="XB-GENE-989223">
    <property type="gene designation" value="frrs1.L"/>
</dbReference>
<dbReference type="OrthoDB" id="6372137at2759"/>
<dbReference type="Proteomes" id="UP000186698">
    <property type="component" value="Chromosome 4L"/>
</dbReference>
<dbReference type="Bgee" id="432203">
    <property type="expression patterns" value="Expressed in intestine and 16 other cell types or tissues"/>
</dbReference>
<dbReference type="GO" id="GO:0016020">
    <property type="term" value="C:membrane"/>
    <property type="evidence" value="ECO:0000318"/>
    <property type="project" value="GO_Central"/>
</dbReference>
<dbReference type="GO" id="GO:0046872">
    <property type="term" value="F:metal ion binding"/>
    <property type="evidence" value="ECO:0007669"/>
    <property type="project" value="UniProtKB-KW"/>
</dbReference>
<dbReference type="GO" id="GO:0016722">
    <property type="term" value="F:oxidoreductase activity, acting on metal ions"/>
    <property type="evidence" value="ECO:0000318"/>
    <property type="project" value="GO_Central"/>
</dbReference>
<dbReference type="GO" id="GO:0006879">
    <property type="term" value="P:intracellular iron ion homeostasis"/>
    <property type="evidence" value="ECO:0000318"/>
    <property type="project" value="GO_Central"/>
</dbReference>
<dbReference type="CDD" id="cd08760">
    <property type="entry name" value="Cyt_b561_FRRS1_like"/>
    <property type="match status" value="1"/>
</dbReference>
<dbReference type="CDD" id="cd09628">
    <property type="entry name" value="DOMON_SDR_2_like"/>
    <property type="match status" value="1"/>
</dbReference>
<dbReference type="CDD" id="cd08544">
    <property type="entry name" value="Reeler"/>
    <property type="match status" value="1"/>
</dbReference>
<dbReference type="FunFam" id="2.60.40.4060:FF:000003">
    <property type="entry name" value="Ferric chelate reductase 1"/>
    <property type="match status" value="1"/>
</dbReference>
<dbReference type="Gene3D" id="1.20.120.1770">
    <property type="match status" value="1"/>
</dbReference>
<dbReference type="Gene3D" id="2.60.40.4060">
    <property type="entry name" value="Reeler domain"/>
    <property type="match status" value="1"/>
</dbReference>
<dbReference type="InterPro" id="IPR006593">
    <property type="entry name" value="Cyt_b561/ferric_Rdtase_TM"/>
</dbReference>
<dbReference type="InterPro" id="IPR005018">
    <property type="entry name" value="DOMON_domain"/>
</dbReference>
<dbReference type="InterPro" id="IPR051237">
    <property type="entry name" value="Ferric-chelate_Red/DefProt"/>
</dbReference>
<dbReference type="InterPro" id="IPR002861">
    <property type="entry name" value="Reeler_dom"/>
</dbReference>
<dbReference type="InterPro" id="IPR042307">
    <property type="entry name" value="Reeler_sf"/>
</dbReference>
<dbReference type="PANTHER" id="PTHR45828">
    <property type="entry name" value="CYTOCHROME B561/FERRIC REDUCTASE TRANSMEMBRANE"/>
    <property type="match status" value="1"/>
</dbReference>
<dbReference type="PANTHER" id="PTHR45828:SF3">
    <property type="entry name" value="FERRIC-CHELATE REDUCTASE 1"/>
    <property type="match status" value="1"/>
</dbReference>
<dbReference type="Pfam" id="PF03351">
    <property type="entry name" value="DOMON"/>
    <property type="match status" value="1"/>
</dbReference>
<dbReference type="Pfam" id="PF02014">
    <property type="entry name" value="Reeler"/>
    <property type="match status" value="1"/>
</dbReference>
<dbReference type="SMART" id="SM00665">
    <property type="entry name" value="B561"/>
    <property type="match status" value="1"/>
</dbReference>
<dbReference type="SMART" id="SM00664">
    <property type="entry name" value="DoH"/>
    <property type="match status" value="1"/>
</dbReference>
<dbReference type="PROSITE" id="PS50939">
    <property type="entry name" value="CYTOCHROME_B561"/>
    <property type="match status" value="1"/>
</dbReference>
<dbReference type="PROSITE" id="PS50836">
    <property type="entry name" value="DOMON"/>
    <property type="match status" value="1"/>
</dbReference>
<dbReference type="PROSITE" id="PS51019">
    <property type="entry name" value="REELIN"/>
    <property type="match status" value="1"/>
</dbReference>
<gene>
    <name type="primary">frrs1</name>
</gene>